<sequence length="75" mass="8153">MRKYLSARSMCCSFFSCAKNCATLGLDSTEGRQFLAVGPQPFASLEGFHGEGGDCLFTTFPPLSIPRRRFCAGHA</sequence>
<dbReference type="EMBL" id="AE000520">
    <property type="protein sequence ID" value="AAC65063.1"/>
    <property type="molecule type" value="Genomic_DNA"/>
</dbReference>
<dbReference type="PIR" id="C71370">
    <property type="entry name" value="C71370"/>
</dbReference>
<dbReference type="RefSeq" id="WP_010881508.1">
    <property type="nucleotide sequence ID" value="NC_021490.2"/>
</dbReference>
<dbReference type="IntAct" id="O83098">
    <property type="interactions" value="39"/>
</dbReference>
<dbReference type="STRING" id="243276.TP_0059"/>
<dbReference type="EnsemblBacteria" id="AAC65063">
    <property type="protein sequence ID" value="AAC65063"/>
    <property type="gene ID" value="TP_0059"/>
</dbReference>
<dbReference type="KEGG" id="tpa:TP_0059"/>
<dbReference type="KEGG" id="tpw:TPANIC_0059"/>
<dbReference type="HOGENOM" id="CLU_2670011_0_0_12"/>
<dbReference type="Proteomes" id="UP000000811">
    <property type="component" value="Chromosome"/>
</dbReference>
<keyword id="KW-1185">Reference proteome</keyword>
<keyword id="KW-0732">Signal</keyword>
<proteinExistence type="inferred from homology"/>
<evidence type="ECO:0000255" key="1"/>
<protein>
    <recommendedName>
        <fullName>Uncharacterized protein TP_0059</fullName>
    </recommendedName>
</protein>
<gene>
    <name type="ordered locus">TP_0059</name>
</gene>
<reference key="1">
    <citation type="journal article" date="1998" name="Science">
        <title>Complete genome sequence of Treponema pallidum, the syphilis spirochete.</title>
        <authorList>
            <person name="Fraser C.M."/>
            <person name="Norris S.J."/>
            <person name="Weinstock G.M."/>
            <person name="White O."/>
            <person name="Sutton G.G."/>
            <person name="Dodson R.J."/>
            <person name="Gwinn M.L."/>
            <person name="Hickey E.K."/>
            <person name="Clayton R.A."/>
            <person name="Ketchum K.A."/>
            <person name="Sodergren E."/>
            <person name="Hardham J.M."/>
            <person name="McLeod M.P."/>
            <person name="Salzberg S.L."/>
            <person name="Peterson J.D."/>
            <person name="Khalak H.G."/>
            <person name="Richardson D.L."/>
            <person name="Howell J.K."/>
            <person name="Chidambaram M."/>
            <person name="Utterback T.R."/>
            <person name="McDonald L.A."/>
            <person name="Artiach P."/>
            <person name="Bowman C."/>
            <person name="Cotton M.D."/>
            <person name="Fujii C."/>
            <person name="Garland S.A."/>
            <person name="Hatch B."/>
            <person name="Horst K."/>
            <person name="Roberts K.M."/>
            <person name="Sandusky M."/>
            <person name="Weidman J.F."/>
            <person name="Smith H.O."/>
            <person name="Venter J.C."/>
        </authorList>
    </citation>
    <scope>NUCLEOTIDE SEQUENCE [LARGE SCALE GENOMIC DNA]</scope>
    <source>
        <strain>Nichols</strain>
    </source>
</reference>
<organism>
    <name type="scientific">Treponema pallidum (strain Nichols)</name>
    <dbReference type="NCBI Taxonomy" id="243276"/>
    <lineage>
        <taxon>Bacteria</taxon>
        <taxon>Pseudomonadati</taxon>
        <taxon>Spirochaetota</taxon>
        <taxon>Spirochaetia</taxon>
        <taxon>Spirochaetales</taxon>
        <taxon>Treponemataceae</taxon>
        <taxon>Treponema</taxon>
    </lineage>
</organism>
<accession>O83098</accession>
<feature type="signal peptide" evidence="1">
    <location>
        <begin position="1"/>
        <end position="18"/>
    </location>
</feature>
<feature type="chain" id="PRO_0000014238" description="Uncharacterized protein TP_0059">
    <location>
        <begin position="19"/>
        <end position="75"/>
    </location>
</feature>
<name>Y059_TREPA</name>